<keyword id="KW-0227">DNA damage</keyword>
<keyword id="KW-0234">DNA repair</keyword>
<keyword id="KW-0235">DNA replication</keyword>
<keyword id="KW-0255">Endonuclease</keyword>
<keyword id="KW-0269">Exonuclease</keyword>
<keyword id="KW-0378">Hydrolase</keyword>
<keyword id="KW-0460">Magnesium</keyword>
<keyword id="KW-0479">Metal-binding</keyword>
<keyword id="KW-0540">Nuclease</keyword>
<keyword id="KW-1185">Reference proteome</keyword>
<feature type="chain" id="PRO_1000130404" description="Flap endonuclease 1">
    <location>
        <begin position="1"/>
        <end position="340"/>
    </location>
</feature>
<feature type="region of interest" description="N-domain">
    <location>
        <begin position="1"/>
        <end position="98"/>
    </location>
</feature>
<feature type="region of interest" description="I-domain">
    <location>
        <begin position="116"/>
        <end position="258"/>
    </location>
</feature>
<feature type="binding site" evidence="2">
    <location>
        <position position="27"/>
    </location>
    <ligand>
        <name>Mg(2+)</name>
        <dbReference type="ChEBI" id="CHEBI:18420"/>
        <label>1</label>
    </ligand>
</feature>
<feature type="binding site" evidence="2">
    <location>
        <position position="80"/>
    </location>
    <ligand>
        <name>Mg(2+)</name>
        <dbReference type="ChEBI" id="CHEBI:18420"/>
        <label>1</label>
    </ligand>
</feature>
<feature type="binding site" evidence="2">
    <location>
        <position position="152"/>
    </location>
    <ligand>
        <name>Mg(2+)</name>
        <dbReference type="ChEBI" id="CHEBI:18420"/>
        <label>1</label>
    </ligand>
</feature>
<feature type="binding site" evidence="2">
    <location>
        <position position="154"/>
    </location>
    <ligand>
        <name>Mg(2+)</name>
        <dbReference type="ChEBI" id="CHEBI:18420"/>
        <label>1</label>
    </ligand>
</feature>
<feature type="binding site" evidence="2">
    <location>
        <position position="173"/>
    </location>
    <ligand>
        <name>Mg(2+)</name>
        <dbReference type="ChEBI" id="CHEBI:18420"/>
        <label>2</label>
    </ligand>
</feature>
<feature type="binding site" evidence="2">
    <location>
        <position position="175"/>
    </location>
    <ligand>
        <name>Mg(2+)</name>
        <dbReference type="ChEBI" id="CHEBI:18420"/>
        <label>2</label>
    </ligand>
</feature>
<feature type="binding site" evidence="2">
    <location>
        <position position="236"/>
    </location>
    <ligand>
        <name>Mg(2+)</name>
        <dbReference type="ChEBI" id="CHEBI:18420"/>
        <label>2</label>
    </ligand>
</feature>
<evidence type="ECO:0000250" key="1"/>
<evidence type="ECO:0000255" key="2">
    <source>
        <dbReference type="HAMAP-Rule" id="MF_00614"/>
    </source>
</evidence>
<organism>
    <name type="scientific">Nitrosopumilus maritimus (strain SCM1)</name>
    <dbReference type="NCBI Taxonomy" id="436308"/>
    <lineage>
        <taxon>Archaea</taxon>
        <taxon>Nitrososphaerota</taxon>
        <taxon>Nitrososphaeria</taxon>
        <taxon>Nitrosopumilales</taxon>
        <taxon>Nitrosopumilaceae</taxon>
        <taxon>Nitrosopumilus</taxon>
    </lineage>
</organism>
<sequence>MGLNLKDLVVREKTTLEAFSNKVIAIDAYNAIYQFLASIRGPDGLQLSDSEGRITSHLSGLLYRNVNFLSLGIKPVYVFDGKPPSLKTAEIERRKQIKMDATIKYEKAIADGNMEDARKYAQQTTSMKDGMVKESKQLLTYFGIPYIEAPSEGEATAAHLTNTGQAYASASQDFDSILCGAKRLVRNFTNSGRRKIPNKNTYIDIVPEIIETQKTLDSLELTREELIDVGILIGTDFNPNGFERVGPKTALKMIKQHSKLEEIPQIQEQLEEIDYQEIRKIFLNPEVADVKEIVFENVNYEGMSNYLVRERSFSEDRVNSTLNRLKKALEKKSQNLDQWF</sequence>
<proteinExistence type="inferred from homology"/>
<accession>A9A4B0</accession>
<comment type="function">
    <text evidence="1">Structure-specific nuclease with 5'-flap endonuclease and 5'-3' exonuclease activities involved in DNA replication and repair. During DNA replication, cleaves the 5'-overhanging flap structure that is generated by displacement synthesis when DNA polymerase encounters the 5'-end of a downstream Okazaki fragment. Binds the unpaired 3'-DNA end and kinks the DNA to facilitate 5' cleavage specificity. Cleaves one nucleotide into the double-stranded DNA from the junction in flap DNA, leaving a nick for ligation. Also involved in the base excision repair (BER) pathway. Acts as a genome stabilization factor that prevents flaps from equilibrating into structures that lead to duplications and deletions. Also possesses 5'-3' exonuclease activity on nicked or gapped double-stranded DNA (By similarity).</text>
</comment>
<comment type="cofactor">
    <cofactor evidence="2">
        <name>Mg(2+)</name>
        <dbReference type="ChEBI" id="CHEBI:18420"/>
    </cofactor>
    <text evidence="2">Binds 2 magnesium ions per subunit. They probably participate in the reaction catalyzed by the enzyme. May bind an additional third magnesium ion after substrate binding.</text>
</comment>
<comment type="subunit">
    <text evidence="2">Interacts with PCNA. PCNA stimulates the nuclease activity without altering cleavage specificity.</text>
</comment>
<comment type="similarity">
    <text evidence="2">Belongs to the XPG/RAD2 endonuclease family. FEN1 subfamily.</text>
</comment>
<protein>
    <recommendedName>
        <fullName evidence="2">Flap endonuclease 1</fullName>
        <shortName evidence="2">FEN-1</shortName>
        <ecNumber evidence="2">3.1.-.-</ecNumber>
    </recommendedName>
    <alternativeName>
        <fullName evidence="2">Flap structure-specific endonuclease 1</fullName>
    </alternativeName>
</protein>
<name>FEN_NITMS</name>
<dbReference type="EC" id="3.1.-.-" evidence="2"/>
<dbReference type="EMBL" id="CP000866">
    <property type="protein sequence ID" value="ABX12599.1"/>
    <property type="molecule type" value="Genomic_DNA"/>
</dbReference>
<dbReference type="RefSeq" id="WP_012215086.1">
    <property type="nucleotide sequence ID" value="NC_010085.1"/>
</dbReference>
<dbReference type="SMR" id="A9A4B0"/>
<dbReference type="FunCoup" id="A9A4B0">
    <property type="interactions" value="161"/>
</dbReference>
<dbReference type="STRING" id="436308.Nmar_0703"/>
<dbReference type="EnsemblBacteria" id="ABX12599">
    <property type="protein sequence ID" value="ABX12599"/>
    <property type="gene ID" value="Nmar_0703"/>
</dbReference>
<dbReference type="GeneID" id="5773954"/>
<dbReference type="KEGG" id="nmr:Nmar_0703"/>
<dbReference type="eggNOG" id="arCOG04050">
    <property type="taxonomic scope" value="Archaea"/>
</dbReference>
<dbReference type="HOGENOM" id="CLU_032444_0_0_2"/>
<dbReference type="InParanoid" id="A9A4B0"/>
<dbReference type="OrthoDB" id="9593at2157"/>
<dbReference type="PhylomeDB" id="A9A4B0"/>
<dbReference type="Proteomes" id="UP000000792">
    <property type="component" value="Chromosome"/>
</dbReference>
<dbReference type="GO" id="GO:0008409">
    <property type="term" value="F:5'-3' exonuclease activity"/>
    <property type="evidence" value="ECO:0007669"/>
    <property type="project" value="UniProtKB-UniRule"/>
</dbReference>
<dbReference type="GO" id="GO:0017108">
    <property type="term" value="F:5'-flap endonuclease activity"/>
    <property type="evidence" value="ECO:0000318"/>
    <property type="project" value="GO_Central"/>
</dbReference>
<dbReference type="GO" id="GO:0003677">
    <property type="term" value="F:DNA binding"/>
    <property type="evidence" value="ECO:0007669"/>
    <property type="project" value="UniProtKB-UniRule"/>
</dbReference>
<dbReference type="GO" id="GO:0000287">
    <property type="term" value="F:magnesium ion binding"/>
    <property type="evidence" value="ECO:0007669"/>
    <property type="project" value="UniProtKB-UniRule"/>
</dbReference>
<dbReference type="GO" id="GO:0006281">
    <property type="term" value="P:DNA repair"/>
    <property type="evidence" value="ECO:0007669"/>
    <property type="project" value="UniProtKB-UniRule"/>
</dbReference>
<dbReference type="GO" id="GO:0043137">
    <property type="term" value="P:DNA replication, removal of RNA primer"/>
    <property type="evidence" value="ECO:0007669"/>
    <property type="project" value="UniProtKB-UniRule"/>
</dbReference>
<dbReference type="CDD" id="cd09903">
    <property type="entry name" value="H3TH_FEN1-Arc"/>
    <property type="match status" value="1"/>
</dbReference>
<dbReference type="CDD" id="cd09867">
    <property type="entry name" value="PIN_FEN1"/>
    <property type="match status" value="1"/>
</dbReference>
<dbReference type="FunFam" id="1.10.150.20:FF:000087">
    <property type="entry name" value="Flap endonuclease 1"/>
    <property type="match status" value="1"/>
</dbReference>
<dbReference type="FunFam" id="3.40.50.1010:FF:000016">
    <property type="entry name" value="Flap endonuclease 1"/>
    <property type="match status" value="1"/>
</dbReference>
<dbReference type="Gene3D" id="1.10.150.20">
    <property type="entry name" value="5' to 3' exonuclease, C-terminal subdomain"/>
    <property type="match status" value="1"/>
</dbReference>
<dbReference type="Gene3D" id="3.40.50.1010">
    <property type="entry name" value="5'-nuclease"/>
    <property type="match status" value="1"/>
</dbReference>
<dbReference type="HAMAP" id="MF_00614">
    <property type="entry name" value="Fen"/>
    <property type="match status" value="1"/>
</dbReference>
<dbReference type="InterPro" id="IPR036279">
    <property type="entry name" value="5-3_exonuclease_C_sf"/>
</dbReference>
<dbReference type="InterPro" id="IPR023426">
    <property type="entry name" value="Flap_endonuc"/>
</dbReference>
<dbReference type="InterPro" id="IPR019973">
    <property type="entry name" value="Flap_endonuc_arc"/>
</dbReference>
<dbReference type="InterPro" id="IPR008918">
    <property type="entry name" value="HhH2"/>
</dbReference>
<dbReference type="InterPro" id="IPR029060">
    <property type="entry name" value="PIN-like_dom_sf"/>
</dbReference>
<dbReference type="InterPro" id="IPR006086">
    <property type="entry name" value="XPG-I_dom"/>
</dbReference>
<dbReference type="InterPro" id="IPR006084">
    <property type="entry name" value="XPG/Rad2"/>
</dbReference>
<dbReference type="InterPro" id="IPR019974">
    <property type="entry name" value="XPG_CS"/>
</dbReference>
<dbReference type="InterPro" id="IPR006085">
    <property type="entry name" value="XPG_DNA_repair_N"/>
</dbReference>
<dbReference type="NCBIfam" id="TIGR03674">
    <property type="entry name" value="fen_arch"/>
    <property type="match status" value="1"/>
</dbReference>
<dbReference type="PANTHER" id="PTHR11081:SF9">
    <property type="entry name" value="FLAP ENDONUCLEASE 1"/>
    <property type="match status" value="1"/>
</dbReference>
<dbReference type="PANTHER" id="PTHR11081">
    <property type="entry name" value="FLAP ENDONUCLEASE FAMILY MEMBER"/>
    <property type="match status" value="1"/>
</dbReference>
<dbReference type="Pfam" id="PF00867">
    <property type="entry name" value="XPG_I"/>
    <property type="match status" value="1"/>
</dbReference>
<dbReference type="Pfam" id="PF00752">
    <property type="entry name" value="XPG_N"/>
    <property type="match status" value="1"/>
</dbReference>
<dbReference type="PRINTS" id="PR00853">
    <property type="entry name" value="XPGRADSUPER"/>
</dbReference>
<dbReference type="SMART" id="SM00279">
    <property type="entry name" value="HhH2"/>
    <property type="match status" value="1"/>
</dbReference>
<dbReference type="SMART" id="SM00484">
    <property type="entry name" value="XPGI"/>
    <property type="match status" value="1"/>
</dbReference>
<dbReference type="SMART" id="SM00485">
    <property type="entry name" value="XPGN"/>
    <property type="match status" value="1"/>
</dbReference>
<dbReference type="SUPFAM" id="SSF47807">
    <property type="entry name" value="5' to 3' exonuclease, C-terminal subdomain"/>
    <property type="match status" value="1"/>
</dbReference>
<dbReference type="SUPFAM" id="SSF88723">
    <property type="entry name" value="PIN domain-like"/>
    <property type="match status" value="1"/>
</dbReference>
<dbReference type="PROSITE" id="PS00841">
    <property type="entry name" value="XPG_1"/>
    <property type="match status" value="1"/>
</dbReference>
<reference key="1">
    <citation type="journal article" date="2010" name="Proc. Natl. Acad. Sci. U.S.A.">
        <title>Nitrosopumilus maritimus genome reveals unique mechanisms for nitrification and autotrophy in globally distributed marine crenarchaea.</title>
        <authorList>
            <person name="Walker C.B."/>
            <person name="de la Torre J.R."/>
            <person name="Klotz M.G."/>
            <person name="Urakawa H."/>
            <person name="Pinel N."/>
            <person name="Arp D.J."/>
            <person name="Brochier-Armanet C."/>
            <person name="Chain P.S."/>
            <person name="Chan P.P."/>
            <person name="Gollabgir A."/>
            <person name="Hemp J."/>
            <person name="Hugler M."/>
            <person name="Karr E.A."/>
            <person name="Konneke M."/>
            <person name="Shin M."/>
            <person name="Lawton T.J."/>
            <person name="Lowe T."/>
            <person name="Martens-Habbena W."/>
            <person name="Sayavedra-Soto L.A."/>
            <person name="Lang D."/>
            <person name="Sievert S.M."/>
            <person name="Rosenzweig A.C."/>
            <person name="Manning G."/>
            <person name="Stahl D.A."/>
        </authorList>
    </citation>
    <scope>NUCLEOTIDE SEQUENCE [LARGE SCALE GENOMIC DNA]</scope>
    <source>
        <strain>SCM1</strain>
    </source>
</reference>
<gene>
    <name evidence="2" type="primary">fen</name>
    <name type="ordered locus">Nmar_0703</name>
</gene>